<keyword id="KW-0058">Aromatic hydrocarbons catabolism</keyword>
<keyword id="KW-0456">Lyase</keyword>
<keyword id="KW-0464">Manganese</keyword>
<keyword id="KW-0479">Metal-binding</keyword>
<comment type="catalytic activity">
    <reaction evidence="1">
        <text>(S)-4-hydroxy-2-oxopentanoate = acetaldehyde + pyruvate</text>
        <dbReference type="Rhea" id="RHEA:22624"/>
        <dbReference type="ChEBI" id="CHEBI:15343"/>
        <dbReference type="ChEBI" id="CHEBI:15361"/>
        <dbReference type="ChEBI" id="CHEBI:73143"/>
        <dbReference type="EC" id="4.1.3.39"/>
    </reaction>
</comment>
<comment type="similarity">
    <text evidence="1">Belongs to the 4-hydroxy-2-oxovalerate aldolase family.</text>
</comment>
<organism>
    <name type="scientific">Acidovorax sp. (strain JS42)</name>
    <dbReference type="NCBI Taxonomy" id="232721"/>
    <lineage>
        <taxon>Bacteria</taxon>
        <taxon>Pseudomonadati</taxon>
        <taxon>Pseudomonadota</taxon>
        <taxon>Betaproteobacteria</taxon>
        <taxon>Burkholderiales</taxon>
        <taxon>Comamonadaceae</taxon>
        <taxon>Acidovorax</taxon>
    </lineage>
</organism>
<dbReference type="EC" id="4.1.3.39" evidence="1"/>
<dbReference type="EMBL" id="CP000539">
    <property type="protein sequence ID" value="ABM40478.1"/>
    <property type="molecule type" value="Genomic_DNA"/>
</dbReference>
<dbReference type="SMR" id="A1W2K3"/>
<dbReference type="STRING" id="232721.Ajs_0224"/>
<dbReference type="KEGG" id="ajs:Ajs_0224"/>
<dbReference type="eggNOG" id="COG0119">
    <property type="taxonomic scope" value="Bacteria"/>
</dbReference>
<dbReference type="HOGENOM" id="CLU_049173_0_0_4"/>
<dbReference type="Proteomes" id="UP000000645">
    <property type="component" value="Chromosome"/>
</dbReference>
<dbReference type="GO" id="GO:0003852">
    <property type="term" value="F:2-isopropylmalate synthase activity"/>
    <property type="evidence" value="ECO:0007669"/>
    <property type="project" value="TreeGrafter"/>
</dbReference>
<dbReference type="GO" id="GO:0008701">
    <property type="term" value="F:4-hydroxy-2-oxovalerate aldolase activity"/>
    <property type="evidence" value="ECO:0007669"/>
    <property type="project" value="UniProtKB-UniRule"/>
</dbReference>
<dbReference type="GO" id="GO:0030145">
    <property type="term" value="F:manganese ion binding"/>
    <property type="evidence" value="ECO:0007669"/>
    <property type="project" value="UniProtKB-UniRule"/>
</dbReference>
<dbReference type="GO" id="GO:0009056">
    <property type="term" value="P:catabolic process"/>
    <property type="evidence" value="ECO:0007669"/>
    <property type="project" value="UniProtKB-KW"/>
</dbReference>
<dbReference type="GO" id="GO:0009098">
    <property type="term" value="P:L-leucine biosynthetic process"/>
    <property type="evidence" value="ECO:0007669"/>
    <property type="project" value="TreeGrafter"/>
</dbReference>
<dbReference type="CDD" id="cd07943">
    <property type="entry name" value="DRE_TIM_HOA"/>
    <property type="match status" value="1"/>
</dbReference>
<dbReference type="Gene3D" id="1.10.8.60">
    <property type="match status" value="1"/>
</dbReference>
<dbReference type="Gene3D" id="3.20.20.70">
    <property type="entry name" value="Aldolase class I"/>
    <property type="match status" value="1"/>
</dbReference>
<dbReference type="HAMAP" id="MF_01656">
    <property type="entry name" value="HOA"/>
    <property type="match status" value="1"/>
</dbReference>
<dbReference type="InterPro" id="IPR050073">
    <property type="entry name" value="2-IPM_HCS-like"/>
</dbReference>
<dbReference type="InterPro" id="IPR017629">
    <property type="entry name" value="4OH_2_O-val_aldolase"/>
</dbReference>
<dbReference type="InterPro" id="IPR013785">
    <property type="entry name" value="Aldolase_TIM"/>
</dbReference>
<dbReference type="InterPro" id="IPR012425">
    <property type="entry name" value="DmpG_comm"/>
</dbReference>
<dbReference type="InterPro" id="IPR035685">
    <property type="entry name" value="DRE_TIM_HOA"/>
</dbReference>
<dbReference type="InterPro" id="IPR000891">
    <property type="entry name" value="PYR_CT"/>
</dbReference>
<dbReference type="NCBIfam" id="TIGR03217">
    <property type="entry name" value="4OH_2_O_val_ald"/>
    <property type="match status" value="1"/>
</dbReference>
<dbReference type="NCBIfam" id="NF006049">
    <property type="entry name" value="PRK08195.1"/>
    <property type="match status" value="1"/>
</dbReference>
<dbReference type="PANTHER" id="PTHR10277:SF9">
    <property type="entry name" value="2-ISOPROPYLMALATE SYNTHASE 1, CHLOROPLASTIC-RELATED"/>
    <property type="match status" value="1"/>
</dbReference>
<dbReference type="PANTHER" id="PTHR10277">
    <property type="entry name" value="HOMOCITRATE SYNTHASE-RELATED"/>
    <property type="match status" value="1"/>
</dbReference>
<dbReference type="Pfam" id="PF07836">
    <property type="entry name" value="DmpG_comm"/>
    <property type="match status" value="1"/>
</dbReference>
<dbReference type="Pfam" id="PF00682">
    <property type="entry name" value="HMGL-like"/>
    <property type="match status" value="1"/>
</dbReference>
<dbReference type="SUPFAM" id="SSF51569">
    <property type="entry name" value="Aldolase"/>
    <property type="match status" value="1"/>
</dbReference>
<dbReference type="SUPFAM" id="SSF89000">
    <property type="entry name" value="post-HMGL domain-like"/>
    <property type="match status" value="1"/>
</dbReference>
<dbReference type="PROSITE" id="PS50991">
    <property type="entry name" value="PYR_CT"/>
    <property type="match status" value="1"/>
</dbReference>
<accession>A1W2K3</accession>
<name>HOA_ACISJ</name>
<gene>
    <name type="ordered locus">Ajs_0224</name>
</gene>
<evidence type="ECO:0000255" key="1">
    <source>
        <dbReference type="HAMAP-Rule" id="MF_01656"/>
    </source>
</evidence>
<feature type="chain" id="PRO_0000387777" description="4-hydroxy-2-oxovalerate aldolase">
    <location>
        <begin position="1"/>
        <end position="342"/>
    </location>
</feature>
<feature type="domain" description="Pyruvate carboxyltransferase" evidence="1">
    <location>
        <begin position="5"/>
        <end position="257"/>
    </location>
</feature>
<feature type="active site" description="Proton acceptor" evidence="1">
    <location>
        <position position="17"/>
    </location>
</feature>
<feature type="binding site" evidence="1">
    <location>
        <begin position="13"/>
        <end position="14"/>
    </location>
    <ligand>
        <name>substrate</name>
    </ligand>
</feature>
<feature type="binding site" evidence="1">
    <location>
        <position position="14"/>
    </location>
    <ligand>
        <name>Mn(2+)</name>
        <dbReference type="ChEBI" id="CHEBI:29035"/>
    </ligand>
</feature>
<feature type="binding site" evidence="1">
    <location>
        <position position="167"/>
    </location>
    <ligand>
        <name>substrate</name>
    </ligand>
</feature>
<feature type="binding site" evidence="1">
    <location>
        <position position="196"/>
    </location>
    <ligand>
        <name>Mn(2+)</name>
        <dbReference type="ChEBI" id="CHEBI:29035"/>
    </ligand>
</feature>
<feature type="binding site" evidence="1">
    <location>
        <position position="196"/>
    </location>
    <ligand>
        <name>substrate</name>
    </ligand>
</feature>
<feature type="binding site" evidence="1">
    <location>
        <position position="198"/>
    </location>
    <ligand>
        <name>Mn(2+)</name>
        <dbReference type="ChEBI" id="CHEBI:29035"/>
    </ligand>
</feature>
<feature type="binding site" evidence="1">
    <location>
        <position position="287"/>
    </location>
    <ligand>
        <name>substrate</name>
    </ligand>
</feature>
<feature type="site" description="Transition state stabilizer" evidence="1">
    <location>
        <position position="13"/>
    </location>
</feature>
<sequence>MTQKITLHDMTLRDGMHPKRHLMTLEQMKSVAQGLDAAGVPLIEVTHGDGLGGASVNYGFPAHSDEEYLGTVIPLMKQAKVSALLLPGIGTVDHLKMAHGLGVHTIRVATHCTEADVSEQHITMARKLDMDTVGFLMMAHMNDAAGLVKQARLMEGYGANCIYVTDSAGYLLPDQVTERIAAVRAALKPETELGFHCHHNLAMGVANSIAAIQAGANRIDAAAAGLGAGAGNTPLEVLVAVLDRMGIDTGVDVWKIQDVAEDLVVPLMDFPIRIDRDALTLGYAGVYGSFLLFAKRAEKKYGIPARDLLVELGRRGMVGGQEDMIEDTALTMARARGLTVNA</sequence>
<proteinExistence type="inferred from homology"/>
<reference key="1">
    <citation type="submission" date="2006-12" db="EMBL/GenBank/DDBJ databases">
        <title>Complete sequence of chromosome 1 of Acidovorax sp. JS42.</title>
        <authorList>
            <person name="Copeland A."/>
            <person name="Lucas S."/>
            <person name="Lapidus A."/>
            <person name="Barry K."/>
            <person name="Detter J.C."/>
            <person name="Glavina del Rio T."/>
            <person name="Dalin E."/>
            <person name="Tice H."/>
            <person name="Pitluck S."/>
            <person name="Chertkov O."/>
            <person name="Brettin T."/>
            <person name="Bruce D."/>
            <person name="Han C."/>
            <person name="Tapia R."/>
            <person name="Gilna P."/>
            <person name="Schmutz J."/>
            <person name="Larimer F."/>
            <person name="Land M."/>
            <person name="Hauser L."/>
            <person name="Kyrpides N."/>
            <person name="Kim E."/>
            <person name="Stahl D."/>
            <person name="Richardson P."/>
        </authorList>
    </citation>
    <scope>NUCLEOTIDE SEQUENCE [LARGE SCALE GENOMIC DNA]</scope>
    <source>
        <strain>JS42</strain>
    </source>
</reference>
<protein>
    <recommendedName>
        <fullName evidence="1">4-hydroxy-2-oxovalerate aldolase</fullName>
        <shortName evidence="1">HOA</shortName>
        <ecNumber evidence="1">4.1.3.39</ecNumber>
    </recommendedName>
    <alternativeName>
        <fullName evidence="1">4-hydroxy-2-keto-pentanoic acid aldolase</fullName>
    </alternativeName>
    <alternativeName>
        <fullName evidence="1">4-hydroxy-2-oxopentanoate aldolase</fullName>
    </alternativeName>
</protein>